<evidence type="ECO:0000250" key="1"/>
<evidence type="ECO:0000255" key="2"/>
<evidence type="ECO:0000269" key="3">
    <source>
    </source>
</evidence>
<evidence type="ECO:0000305" key="4"/>
<protein>
    <recommendedName>
        <fullName>Golgi SNAP receptor complex member 1</fullName>
    </recommendedName>
    <alternativeName>
        <fullName>28 kDa Golgi SNARE protein</fullName>
        <shortName>GOS-28</shortName>
    </alternativeName>
</protein>
<proteinExistence type="evidence at transcript level"/>
<name>GOSR1_CAEEL</name>
<feature type="chain" id="PRO_0000415671" description="Golgi SNAP receptor complex member 1">
    <location>
        <begin position="1"/>
        <end position="234"/>
    </location>
</feature>
<feature type="topological domain" description="Cytoplasmic" evidence="2">
    <location>
        <begin position="1"/>
        <end position="212"/>
    </location>
</feature>
<feature type="transmembrane region" description="Helical; Anchor for type IV membrane protein" evidence="2">
    <location>
        <begin position="213"/>
        <end position="233"/>
    </location>
</feature>
<feature type="topological domain" description="Vesicular" evidence="2">
    <location>
        <position position="234"/>
    </location>
</feature>
<feature type="coiled-coil region" evidence="2">
    <location>
        <begin position="54"/>
        <end position="121"/>
    </location>
</feature>
<dbReference type="EMBL" id="FO081093">
    <property type="protein sequence ID" value="CCD69065.1"/>
    <property type="molecule type" value="Genomic_DNA"/>
</dbReference>
<dbReference type="RefSeq" id="NP_498621.1">
    <property type="nucleotide sequence ID" value="NM_066220.5"/>
</dbReference>
<dbReference type="SMR" id="Q95ZW1"/>
<dbReference type="BioGRID" id="41253">
    <property type="interactions" value="1"/>
</dbReference>
<dbReference type="FunCoup" id="Q95ZW1">
    <property type="interactions" value="3173"/>
</dbReference>
<dbReference type="STRING" id="6239.F08F8.8.1"/>
<dbReference type="PaxDb" id="6239-F08F8.8"/>
<dbReference type="PeptideAtlas" id="Q95ZW1"/>
<dbReference type="EnsemblMetazoa" id="F08F8.8.1">
    <property type="protein sequence ID" value="F08F8.8.1"/>
    <property type="gene ID" value="WBGene00017273"/>
</dbReference>
<dbReference type="GeneID" id="176044"/>
<dbReference type="KEGG" id="cel:CELE_F08F8.8"/>
<dbReference type="UCSC" id="F08F8.8">
    <property type="organism name" value="c. elegans"/>
</dbReference>
<dbReference type="AGR" id="WB:WBGene00017273"/>
<dbReference type="CTD" id="176044"/>
<dbReference type="WormBase" id="F08F8.8">
    <property type="protein sequence ID" value="CE27935"/>
    <property type="gene ID" value="WBGene00017273"/>
    <property type="gene designation" value="gos-28"/>
</dbReference>
<dbReference type="eggNOG" id="KOG3208">
    <property type="taxonomic scope" value="Eukaryota"/>
</dbReference>
<dbReference type="GeneTree" id="ENSGT00390000008688"/>
<dbReference type="HOGENOM" id="CLU_078034_0_1_1"/>
<dbReference type="InParanoid" id="Q95ZW1"/>
<dbReference type="OMA" id="EILRDYC"/>
<dbReference type="OrthoDB" id="1927044at2759"/>
<dbReference type="PhylomeDB" id="Q95ZW1"/>
<dbReference type="Reactome" id="R-CEL-6807878">
    <property type="pathway name" value="COPI-mediated anterograde transport"/>
</dbReference>
<dbReference type="Reactome" id="R-CEL-6811438">
    <property type="pathway name" value="Intra-Golgi traffic"/>
</dbReference>
<dbReference type="PRO" id="PR:Q95ZW1"/>
<dbReference type="Proteomes" id="UP000001940">
    <property type="component" value="Chromosome III"/>
</dbReference>
<dbReference type="Bgee" id="WBGene00017273">
    <property type="expression patterns" value="Expressed in embryo and 3 other cell types or tissues"/>
</dbReference>
<dbReference type="GO" id="GO:0005801">
    <property type="term" value="C:cis-Golgi network"/>
    <property type="evidence" value="ECO:0007669"/>
    <property type="project" value="InterPro"/>
</dbReference>
<dbReference type="GO" id="GO:0005797">
    <property type="term" value="C:Golgi medial cisterna"/>
    <property type="evidence" value="ECO:0000318"/>
    <property type="project" value="GO_Central"/>
</dbReference>
<dbReference type="GO" id="GO:0000139">
    <property type="term" value="C:Golgi membrane"/>
    <property type="evidence" value="ECO:0000318"/>
    <property type="project" value="GO_Central"/>
</dbReference>
<dbReference type="GO" id="GO:0031201">
    <property type="term" value="C:SNARE complex"/>
    <property type="evidence" value="ECO:0000318"/>
    <property type="project" value="GO_Central"/>
</dbReference>
<dbReference type="GO" id="GO:0005484">
    <property type="term" value="F:SNAP receptor activity"/>
    <property type="evidence" value="ECO:0000318"/>
    <property type="project" value="GO_Central"/>
</dbReference>
<dbReference type="GO" id="GO:0006888">
    <property type="term" value="P:endoplasmic reticulum to Golgi vesicle-mediated transport"/>
    <property type="evidence" value="ECO:0000318"/>
    <property type="project" value="GO_Central"/>
</dbReference>
<dbReference type="GO" id="GO:0048219">
    <property type="term" value="P:inter-Golgi cisterna vesicle-mediated transport"/>
    <property type="evidence" value="ECO:0000318"/>
    <property type="project" value="GO_Central"/>
</dbReference>
<dbReference type="GO" id="GO:0015031">
    <property type="term" value="P:protein transport"/>
    <property type="evidence" value="ECO:0007669"/>
    <property type="project" value="UniProtKB-KW"/>
</dbReference>
<dbReference type="GO" id="GO:0006906">
    <property type="term" value="P:vesicle fusion"/>
    <property type="evidence" value="ECO:0000318"/>
    <property type="project" value="GO_Central"/>
</dbReference>
<dbReference type="InterPro" id="IPR023601">
    <property type="entry name" value="Golgi_SNAP_su1"/>
</dbReference>
<dbReference type="PANTHER" id="PTHR21094:SF2">
    <property type="entry name" value="GOLGI SNAP RECEPTOR COMPLEX MEMBER 1"/>
    <property type="match status" value="1"/>
</dbReference>
<dbReference type="PANTHER" id="PTHR21094">
    <property type="entry name" value="GOS-28 SNARE- RELATED"/>
    <property type="match status" value="1"/>
</dbReference>
<dbReference type="Pfam" id="PF12352">
    <property type="entry name" value="V-SNARE_C"/>
    <property type="match status" value="1"/>
</dbReference>
<dbReference type="PIRSF" id="PIRSF027109">
    <property type="entry name" value="Golgi_SNARE"/>
    <property type="match status" value="1"/>
</dbReference>
<organism>
    <name type="scientific">Caenorhabditis elegans</name>
    <dbReference type="NCBI Taxonomy" id="6239"/>
    <lineage>
        <taxon>Eukaryota</taxon>
        <taxon>Metazoa</taxon>
        <taxon>Ecdysozoa</taxon>
        <taxon>Nematoda</taxon>
        <taxon>Chromadorea</taxon>
        <taxon>Rhabditida</taxon>
        <taxon>Rhabditina</taxon>
        <taxon>Rhabditomorpha</taxon>
        <taxon>Rhabditoidea</taxon>
        <taxon>Rhabditidae</taxon>
        <taxon>Peloderinae</taxon>
        <taxon>Caenorhabditis</taxon>
    </lineage>
</organism>
<comment type="function">
    <text evidence="3">Involved in transport from the ER to the Golgi apparatus as well as in intra-Golgi transport. It belongs to a super-family of proteins called t-SNAREs or soluble NSF (N-ethylmaleimide-sensitive factor) attachment protein receptor. Cooperates with ykt-6 for proper expression of Golgi-resident proteins. Required along with ykt-6 for normal embryonic development, seam cell division or differentiation, and ray formation.</text>
</comment>
<comment type="subunit">
    <text evidence="1">Component of several multiprotein Golgi SNARE complexes.</text>
</comment>
<comment type="subcellular location">
    <subcellularLocation>
        <location evidence="1">Golgi apparatus membrane</location>
        <topology evidence="1">Single-pass type IV membrane protein</topology>
    </subcellularLocation>
</comment>
<comment type="developmental stage">
    <text evidence="3">Expressed in two-fold stage embryos in the lateral epithelial cells (seam cells) and continues throughout all larval stages. In adults, expression becomes faint in seam cells and strong in intestinal cells. Also weakly expressed in epithelial cells of the vulva. Overall, expression appears to be restricted to certain types of epithelial cells and changes with developmental stages.</text>
</comment>
<comment type="disruption phenotype">
    <text evidence="3">Reduction in brood size at adulthood. Abnormal tail structure, and loss of the T-cell derived rays, R7-R9, of the male-specific sensory rays, but ray sensory function remains intact. Combined with ykt-6 knock-down causes reduced seam cell leading to loss of ray phenotype. At cellular level, reduced expression of Golgi-resident proteins like mannosidase II, and more so in combination with ykt-6 knock-down.</text>
</comment>
<comment type="similarity">
    <text evidence="4">Belongs to the GOSR1 family.</text>
</comment>
<accession>Q95ZW1</accession>
<reference key="1">
    <citation type="journal article" date="1998" name="Science">
        <title>Genome sequence of the nematode C. elegans: a platform for investigating biology.</title>
        <authorList>
            <consortium name="The C. elegans sequencing consortium"/>
        </authorList>
    </citation>
    <scope>NUCLEOTIDE SEQUENCE [LARGE SCALE GENOMIC DNA]</scope>
    <source>
        <strain>Bristol N2</strain>
    </source>
</reference>
<reference key="2">
    <citation type="journal article" date="2009" name="Genes Cells">
        <title>Functional analysis of GS28, an intra-Golgi SNARE, in Caenorhabditis elegans.</title>
        <authorList>
            <person name="Maekawa M."/>
            <person name="Inoue T."/>
            <person name="Kobuna H."/>
            <person name="Nishimura T."/>
            <person name="Gengyo-Ando K."/>
            <person name="Mitani S."/>
            <person name="Arai H."/>
        </authorList>
    </citation>
    <scope>FUNCTION</scope>
    <scope>DEVELOPMENTAL STAGE</scope>
    <scope>DISRUPTION PHENOTYPE</scope>
</reference>
<keyword id="KW-0175">Coiled coil</keyword>
<keyword id="KW-0931">ER-Golgi transport</keyword>
<keyword id="KW-0333">Golgi apparatus</keyword>
<keyword id="KW-0472">Membrane</keyword>
<keyword id="KW-0653">Protein transport</keyword>
<keyword id="KW-0675">Receptor</keyword>
<keyword id="KW-1185">Reference proteome</keyword>
<keyword id="KW-0812">Transmembrane</keyword>
<keyword id="KW-1133">Transmembrane helix</keyword>
<keyword id="KW-0813">Transport</keyword>
<gene>
    <name type="primary">gos-28</name>
    <name type="synonym">gosr-1</name>
    <name type="synonym">gs28</name>
    <name type="ORF">F08F8.8</name>
</gene>
<sequence length="234" mass="26776">MSETWEALRKKARSTENSIDVKLVSLNKLTASSHGGFDIDEKTVSSRQTSFKTVTTEIEGLIEQLTNINDDMNDVAGAQSSASWANNPAIQHTLRRHREILRDYGSEYRRARDNVDQVLQRELLLSSSNENRNNPILNNRARGYDMYLKENDHINACDRLLDEQLEMAMSTKENMARQGINLRGISTRLHHISKKYPAINNLMQKIKTKKQKNTLILAAVISSCLIFTIFWIIN</sequence>